<dbReference type="EC" id="2.1.1.57" evidence="2"/>
<dbReference type="EMBL" id="L22858">
    <property type="protein sequence ID" value="AAA66699.1"/>
    <property type="molecule type" value="Genomic_DNA"/>
</dbReference>
<dbReference type="PIR" id="F72858">
    <property type="entry name" value="F72858"/>
</dbReference>
<dbReference type="RefSeq" id="NP_054099.1">
    <property type="nucleotide sequence ID" value="NC_001623.1"/>
</dbReference>
<dbReference type="SMR" id="P41469"/>
<dbReference type="GeneID" id="1403902"/>
<dbReference type="KEGG" id="vg:1403902"/>
<dbReference type="OrthoDB" id="19069at10239"/>
<dbReference type="Proteomes" id="UP000008292">
    <property type="component" value="Segment"/>
</dbReference>
<dbReference type="GO" id="GO:0004483">
    <property type="term" value="F:mRNA (nucleoside-2'-O-)-methyltransferase activity"/>
    <property type="evidence" value="ECO:0007669"/>
    <property type="project" value="UniProtKB-EC"/>
</dbReference>
<dbReference type="GO" id="GO:0006370">
    <property type="term" value="P:7-methylguanosine mRNA capping"/>
    <property type="evidence" value="ECO:0007669"/>
    <property type="project" value="TreeGrafter"/>
</dbReference>
<dbReference type="GO" id="GO:0032259">
    <property type="term" value="P:methylation"/>
    <property type="evidence" value="ECO:0007669"/>
    <property type="project" value="UniProtKB-KW"/>
</dbReference>
<dbReference type="Gene3D" id="3.40.50.12760">
    <property type="match status" value="1"/>
</dbReference>
<dbReference type="InterPro" id="IPR050851">
    <property type="entry name" value="mRNA_Cap_2O-Ribose_MeTrfase"/>
</dbReference>
<dbReference type="InterPro" id="IPR002877">
    <property type="entry name" value="RNA_MeTrfase_FtsJ_dom"/>
</dbReference>
<dbReference type="InterPro" id="IPR025816">
    <property type="entry name" value="RrmJ-type_MeTrfase"/>
</dbReference>
<dbReference type="InterPro" id="IPR029063">
    <property type="entry name" value="SAM-dependent_MTases_sf"/>
</dbReference>
<dbReference type="PANTHER" id="PTHR16121:SF0">
    <property type="entry name" value="CAP-SPECIFIC MRNA (NUCLEOSIDE-2'-O-)-METHYLTRANSFERASE 1"/>
    <property type="match status" value="1"/>
</dbReference>
<dbReference type="PANTHER" id="PTHR16121">
    <property type="entry name" value="CAP-SPECIFIC MRNA (NUCLEOSIDE-2'-O-)-METHYLTRANSFERASE 1-RELATED"/>
    <property type="match status" value="1"/>
</dbReference>
<dbReference type="Pfam" id="PF01728">
    <property type="entry name" value="FtsJ"/>
    <property type="match status" value="1"/>
</dbReference>
<dbReference type="SUPFAM" id="SSF53335">
    <property type="entry name" value="S-adenosyl-L-methionine-dependent methyltransferases"/>
    <property type="match status" value="1"/>
</dbReference>
<dbReference type="PROSITE" id="PS51613">
    <property type="entry name" value="SAM_MT_RRMJ"/>
    <property type="match status" value="1"/>
</dbReference>
<reference key="1">
    <citation type="journal article" date="1994" name="Virology">
        <title>The complete DNA sequence of Autographa californica nuclear polyhedrosis virus.</title>
        <authorList>
            <person name="Ayres M.D."/>
            <person name="Howard S.C."/>
            <person name="Kuzio J."/>
            <person name="Lopez-Ferber M."/>
            <person name="Possee R.D."/>
        </authorList>
    </citation>
    <scope>NUCLEOTIDE SEQUENCE [LARGE SCALE GENOMIC DNA]</scope>
    <source>
        <strain>C6</strain>
    </source>
</reference>
<reference key="2">
    <citation type="journal article" date="2003" name="J. Virol.">
        <title>Autographa californica nucleopolyhedrovirus orf69 encodes an RNA cap (nucleoside-2'-O)-methyltransferase.</title>
        <authorList>
            <person name="Wu X."/>
            <person name="Guarino L.A."/>
        </authorList>
    </citation>
    <scope>FUNCTION</scope>
    <scope>CATALYTIC ACTIVITY</scope>
</reference>
<organismHost>
    <name type="scientific">Lepidoptera</name>
    <name type="common">butterflies and moths</name>
    <dbReference type="NCBI Taxonomy" id="7088"/>
</organismHost>
<organism>
    <name type="scientific">Autographa californica nuclear polyhedrosis virus</name>
    <name type="common">AcMNPV</name>
    <dbReference type="NCBI Taxonomy" id="46015"/>
    <lineage>
        <taxon>Viruses</taxon>
        <taxon>Viruses incertae sedis</taxon>
        <taxon>Naldaviricetes</taxon>
        <taxon>Lefavirales</taxon>
        <taxon>Baculoviridae</taxon>
        <taxon>Alphabaculovirus</taxon>
        <taxon>Alphabaculovirus aucalifornicae</taxon>
    </lineage>
</organism>
<evidence type="ECO:0000255" key="1">
    <source>
        <dbReference type="PROSITE-ProRule" id="PRU00945"/>
    </source>
</evidence>
<evidence type="ECO:0000269" key="2">
    <source>
    </source>
</evidence>
<keyword id="KW-0489">Methyltransferase</keyword>
<keyword id="KW-1185">Reference proteome</keyword>
<keyword id="KW-0949">S-adenosyl-L-methionine</keyword>
<keyword id="KW-0808">Transferase</keyword>
<sequence length="262" mass="30355">MLQQKLNKLKDGLNTFSSKSVVCARSKLFDKRPTRRPRCWRKLSEIDKKFHVCRHVDTFLDLCGGPGEFANYTMSLNPLCKAYGVTLTNNSVCVYKPTVRKRKNFTTITGPDKSGDVFDKNVVFEISIKCGNACDLVLADGSVDVNGRENEQERLNFDLIMCETQLILICLRPGGNCVLKVFDAFEHETIQMLNKFVNHFEKWVLYKPPSSRPANSERYLICFNKLVRPYCNNYVNELEKQFEKYYRIQLKNLNKLINLLKI</sequence>
<name>CMTR_NPVAC</name>
<protein>
    <recommendedName>
        <fullName>Cap-specific mRNA (nucleoside-2'-O-)-methyltransferase</fullName>
        <ecNumber evidence="2">2.1.1.57</ecNumber>
    </recommendedName>
</protein>
<feature type="chain" id="PRO_0000133008" description="Cap-specific mRNA (nucleoside-2'-O-)-methyltransferase">
    <location>
        <begin position="1"/>
        <end position="262"/>
    </location>
</feature>
<feature type="domain" description="RrmJ-type SAM-dependent 2'-O-MTase" evidence="1">
    <location>
        <begin position="34"/>
        <end position="226"/>
    </location>
</feature>
<feature type="active site" description="Proton acceptor" evidence="1">
    <location>
        <position position="180"/>
    </location>
</feature>
<feature type="binding site" evidence="1">
    <location>
        <position position="67"/>
    </location>
    <ligand>
        <name>S-adenosyl-L-methionine</name>
        <dbReference type="ChEBI" id="CHEBI:59789"/>
    </ligand>
</feature>
<feature type="binding site" evidence="1">
    <location>
        <position position="140"/>
    </location>
    <ligand>
        <name>S-adenosyl-L-methionine</name>
        <dbReference type="ChEBI" id="CHEBI:59789"/>
    </ligand>
</feature>
<comment type="function">
    <text evidence="2">S-adenosyl-L-methionine-dependent methyltransferase that mediates mRNA cap 2'-O-ribose methylation to the 5'-cap structure of late viral transcripts.</text>
</comment>
<comment type="catalytic activity">
    <reaction evidence="2">
        <text>a 5'-end (N(7)-methyl 5'-triphosphoguanosine)-ribonucleoside in mRNA + S-adenosyl-L-methionine = a 5'-end (N(7)-methyl 5'-triphosphoguanosine)-(2'-O-methyl-ribonucleoside) in mRNA + S-adenosyl-L-homocysteine + H(+)</text>
        <dbReference type="Rhea" id="RHEA:67020"/>
        <dbReference type="Rhea" id="RHEA-COMP:17167"/>
        <dbReference type="Rhea" id="RHEA-COMP:17168"/>
        <dbReference type="ChEBI" id="CHEBI:15378"/>
        <dbReference type="ChEBI" id="CHEBI:57856"/>
        <dbReference type="ChEBI" id="CHEBI:59789"/>
        <dbReference type="ChEBI" id="CHEBI:156461"/>
        <dbReference type="ChEBI" id="CHEBI:167609"/>
        <dbReference type="EC" id="2.1.1.57"/>
    </reaction>
</comment>
<accession>P41469</accession>
<proteinExistence type="evidence at protein level"/>